<dbReference type="EMBL" id="AF104222">
    <property type="protein sequence ID" value="AAC84141.1"/>
    <property type="molecule type" value="mRNA"/>
</dbReference>
<dbReference type="EMBL" id="AK315708">
    <property type="protein sequence ID" value="BAG38069.1"/>
    <property type="molecule type" value="mRNA"/>
</dbReference>
<dbReference type="EMBL" id="CH471192">
    <property type="protein sequence ID" value="EAW52260.1"/>
    <property type="molecule type" value="Genomic_DNA"/>
</dbReference>
<dbReference type="EMBL" id="BC000495">
    <property type="protein sequence ID" value="AAH00495.1"/>
    <property type="molecule type" value="mRNA"/>
</dbReference>
<dbReference type="EMBL" id="BC001947">
    <property type="protein sequence ID" value="AAH01947.1"/>
    <property type="molecule type" value="mRNA"/>
</dbReference>
<dbReference type="EMBL" id="AB033004">
    <property type="protein sequence ID" value="BAA86492.1"/>
    <property type="molecule type" value="mRNA"/>
</dbReference>
<dbReference type="CCDS" id="CCDS10675.1"/>
<dbReference type="RefSeq" id="NP_001230575.1">
    <property type="nucleotide sequence ID" value="NM_001243646.2"/>
</dbReference>
<dbReference type="RefSeq" id="NP_006101.1">
    <property type="nucleotide sequence ID" value="NM_006110.3"/>
</dbReference>
<dbReference type="PDB" id="1GYF">
    <property type="method" value="NMR"/>
    <property type="chains" value="A=280-341"/>
</dbReference>
<dbReference type="PDB" id="1L2Z">
    <property type="method" value="NMR"/>
    <property type="chains" value="A=280-341"/>
</dbReference>
<dbReference type="PDB" id="1SYX">
    <property type="method" value="X-ray"/>
    <property type="resolution" value="2.34 A"/>
    <property type="chains" value="B/D/F=262-341"/>
</dbReference>
<dbReference type="PDB" id="4BWS">
    <property type="method" value="X-ray"/>
    <property type="resolution" value="2.50 A"/>
    <property type="chains" value="C/F=280-341"/>
</dbReference>
<dbReference type="PDB" id="8Q7Q">
    <property type="method" value="EM"/>
    <property type="resolution" value="3.20 A"/>
    <property type="chains" value="G=1-341"/>
</dbReference>
<dbReference type="PDB" id="8Q7V">
    <property type="method" value="EM"/>
    <property type="resolution" value="3.80 A"/>
    <property type="chains" value="G=1-341"/>
</dbReference>
<dbReference type="PDB" id="8Q7W">
    <property type="method" value="EM"/>
    <property type="resolution" value="3.90 A"/>
    <property type="chains" value="G=1-341"/>
</dbReference>
<dbReference type="PDB" id="8Q7X">
    <property type="method" value="EM"/>
    <property type="resolution" value="4.60 A"/>
    <property type="chains" value="G=1-341"/>
</dbReference>
<dbReference type="PDB" id="8Q91">
    <property type="method" value="EM"/>
    <property type="resolution" value="3.10 A"/>
    <property type="chains" value="F=1-341"/>
</dbReference>
<dbReference type="PDB" id="8RC0">
    <property type="method" value="EM"/>
    <property type="resolution" value="3.20 A"/>
    <property type="chains" value="F=1-341"/>
</dbReference>
<dbReference type="PDBsum" id="1GYF"/>
<dbReference type="PDBsum" id="1L2Z"/>
<dbReference type="PDBsum" id="1SYX"/>
<dbReference type="PDBsum" id="4BWS"/>
<dbReference type="PDBsum" id="8Q7Q"/>
<dbReference type="PDBsum" id="8Q7V"/>
<dbReference type="PDBsum" id="8Q7W"/>
<dbReference type="PDBsum" id="8Q7X"/>
<dbReference type="PDBsum" id="8Q91"/>
<dbReference type="PDBsum" id="8RC0"/>
<dbReference type="EMDB" id="EMD-18229"/>
<dbReference type="EMDB" id="EMD-18234"/>
<dbReference type="EMDB" id="EMD-18235"/>
<dbReference type="EMDB" id="EMD-18237"/>
<dbReference type="EMDB" id="EMD-18267"/>
<dbReference type="EMDB" id="EMD-19041"/>
<dbReference type="SMR" id="O95400"/>
<dbReference type="BioGRID" id="115690">
    <property type="interactions" value="245"/>
</dbReference>
<dbReference type="CORUM" id="O95400"/>
<dbReference type="ELM" id="O95400"/>
<dbReference type="FunCoup" id="O95400">
    <property type="interactions" value="4227"/>
</dbReference>
<dbReference type="IntAct" id="O95400">
    <property type="interactions" value="130"/>
</dbReference>
<dbReference type="MINT" id="O95400"/>
<dbReference type="STRING" id="9606.ENSP00000304903"/>
<dbReference type="GlyCosmos" id="O95400">
    <property type="glycosylation" value="1 site, 1 glycan"/>
</dbReference>
<dbReference type="GlyGen" id="O95400">
    <property type="glycosylation" value="2 sites, 1 O-linked glycan (1 site)"/>
</dbReference>
<dbReference type="iPTMnet" id="O95400"/>
<dbReference type="MetOSite" id="O95400"/>
<dbReference type="PhosphoSitePlus" id="O95400"/>
<dbReference type="BioMuta" id="CD2BP2"/>
<dbReference type="jPOST" id="O95400"/>
<dbReference type="MassIVE" id="O95400"/>
<dbReference type="PaxDb" id="9606-ENSP00000304903"/>
<dbReference type="PeptideAtlas" id="O95400"/>
<dbReference type="ProteomicsDB" id="50853"/>
<dbReference type="Pumba" id="O95400"/>
<dbReference type="Antibodypedia" id="27184">
    <property type="antibodies" value="199 antibodies from 30 providers"/>
</dbReference>
<dbReference type="DNASU" id="10421"/>
<dbReference type="Ensembl" id="ENST00000305596.8">
    <property type="protein sequence ID" value="ENSP00000304903.3"/>
    <property type="gene ID" value="ENSG00000169217.9"/>
</dbReference>
<dbReference type="Ensembl" id="ENST00000569466.1">
    <property type="protein sequence ID" value="ENSP00000456935.1"/>
    <property type="gene ID" value="ENSG00000169217.9"/>
</dbReference>
<dbReference type="GeneID" id="10421"/>
<dbReference type="KEGG" id="hsa:10421"/>
<dbReference type="MANE-Select" id="ENST00000305596.8">
    <property type="protein sequence ID" value="ENSP00000304903.3"/>
    <property type="RefSeq nucleotide sequence ID" value="NM_006110.3"/>
    <property type="RefSeq protein sequence ID" value="NP_006101.1"/>
</dbReference>
<dbReference type="UCSC" id="uc002dxr.4">
    <property type="organism name" value="human"/>
</dbReference>
<dbReference type="AGR" id="HGNC:1656"/>
<dbReference type="CTD" id="10421"/>
<dbReference type="GeneCards" id="CD2BP2"/>
<dbReference type="HGNC" id="HGNC:1656">
    <property type="gene designation" value="CD2BP2"/>
</dbReference>
<dbReference type="HPA" id="ENSG00000169217">
    <property type="expression patterns" value="Low tissue specificity"/>
</dbReference>
<dbReference type="MIM" id="604470">
    <property type="type" value="gene"/>
</dbReference>
<dbReference type="neXtProt" id="NX_O95400"/>
<dbReference type="OpenTargets" id="ENSG00000169217"/>
<dbReference type="PharmGKB" id="PA26209"/>
<dbReference type="VEuPathDB" id="HostDB:ENSG00000169217"/>
<dbReference type="eggNOG" id="KOG2950">
    <property type="taxonomic scope" value="Eukaryota"/>
</dbReference>
<dbReference type="GeneTree" id="ENSGT00390000012483"/>
<dbReference type="HOGENOM" id="CLU_062973_0_0_1"/>
<dbReference type="InParanoid" id="O95400"/>
<dbReference type="OMA" id="GENTNFY"/>
<dbReference type="OrthoDB" id="331341at2759"/>
<dbReference type="PAN-GO" id="O95400">
    <property type="GO annotations" value="1 GO annotation based on evolutionary models"/>
</dbReference>
<dbReference type="PhylomeDB" id="O95400"/>
<dbReference type="TreeFam" id="TF313042"/>
<dbReference type="PathwayCommons" id="O95400"/>
<dbReference type="SignaLink" id="O95400"/>
<dbReference type="BioGRID-ORCS" id="10421">
    <property type="hits" value="166 hits in 1156 CRISPR screens"/>
</dbReference>
<dbReference type="ChiTaRS" id="CD2BP2">
    <property type="organism name" value="human"/>
</dbReference>
<dbReference type="EvolutionaryTrace" id="O95400"/>
<dbReference type="GeneWiki" id="CD2BP2"/>
<dbReference type="GenomeRNAi" id="10421"/>
<dbReference type="Pharos" id="O95400">
    <property type="development level" value="Tbio"/>
</dbReference>
<dbReference type="PRO" id="PR:O95400"/>
<dbReference type="Proteomes" id="UP000005640">
    <property type="component" value="Chromosome 16"/>
</dbReference>
<dbReference type="RNAct" id="O95400">
    <property type="molecule type" value="protein"/>
</dbReference>
<dbReference type="Bgee" id="ENSG00000169217">
    <property type="expression patterns" value="Expressed in tendon of biceps brachii and 214 other cell types or tissues"/>
</dbReference>
<dbReference type="ExpressionAtlas" id="O95400">
    <property type="expression patterns" value="baseline and differential"/>
</dbReference>
<dbReference type="GO" id="GO:0005737">
    <property type="term" value="C:cytoplasm"/>
    <property type="evidence" value="ECO:0000304"/>
    <property type="project" value="ProtInc"/>
</dbReference>
<dbReference type="GO" id="GO:0005829">
    <property type="term" value="C:cytosol"/>
    <property type="evidence" value="ECO:0000314"/>
    <property type="project" value="HPA"/>
</dbReference>
<dbReference type="GO" id="GO:0001650">
    <property type="term" value="C:fibrillar center"/>
    <property type="evidence" value="ECO:0000314"/>
    <property type="project" value="HPA"/>
</dbReference>
<dbReference type="GO" id="GO:0016607">
    <property type="term" value="C:nuclear speck"/>
    <property type="evidence" value="ECO:0000314"/>
    <property type="project" value="HPA"/>
</dbReference>
<dbReference type="GO" id="GO:0005654">
    <property type="term" value="C:nucleoplasm"/>
    <property type="evidence" value="ECO:0000314"/>
    <property type="project" value="BHF-UCL"/>
</dbReference>
<dbReference type="GO" id="GO:0005634">
    <property type="term" value="C:nucleus"/>
    <property type="evidence" value="ECO:0000314"/>
    <property type="project" value="BHF-UCL"/>
</dbReference>
<dbReference type="GO" id="GO:0005682">
    <property type="term" value="C:U5 snRNP"/>
    <property type="evidence" value="ECO:0000314"/>
    <property type="project" value="BHF-UCL"/>
</dbReference>
<dbReference type="GO" id="GO:0043021">
    <property type="term" value="F:ribonucleoprotein complex binding"/>
    <property type="evidence" value="ECO:0000314"/>
    <property type="project" value="BHF-UCL"/>
</dbReference>
<dbReference type="GO" id="GO:0000244">
    <property type="term" value="P:spliceosomal tri-snRNP complex assembly"/>
    <property type="evidence" value="ECO:0000303"/>
    <property type="project" value="BHF-UCL"/>
</dbReference>
<dbReference type="CDD" id="cd00072">
    <property type="entry name" value="GYF"/>
    <property type="match status" value="1"/>
</dbReference>
<dbReference type="DisProt" id="DP02457"/>
<dbReference type="FunFam" id="3.30.1490.40:FF:000002">
    <property type="entry name" value="CD2 antigen cytoplasmic tail-binding protein 2"/>
    <property type="match status" value="1"/>
</dbReference>
<dbReference type="Gene3D" id="3.30.1490.40">
    <property type="match status" value="1"/>
</dbReference>
<dbReference type="IDEAL" id="IID00533"/>
<dbReference type="InterPro" id="IPR039905">
    <property type="entry name" value="CD2BP2/Lin1"/>
</dbReference>
<dbReference type="InterPro" id="IPR003169">
    <property type="entry name" value="GYF"/>
</dbReference>
<dbReference type="InterPro" id="IPR035445">
    <property type="entry name" value="GYF-like_dom_sf"/>
</dbReference>
<dbReference type="PANTHER" id="PTHR13138:SF3">
    <property type="entry name" value="CD2 ANTIGEN CYTOPLASMIC TAIL-BINDING PROTEIN 2"/>
    <property type="match status" value="1"/>
</dbReference>
<dbReference type="PANTHER" id="PTHR13138">
    <property type="entry name" value="PROTEIN LIN1"/>
    <property type="match status" value="1"/>
</dbReference>
<dbReference type="Pfam" id="PF02213">
    <property type="entry name" value="GYF"/>
    <property type="match status" value="1"/>
</dbReference>
<dbReference type="SMART" id="SM00444">
    <property type="entry name" value="GYF"/>
    <property type="match status" value="1"/>
</dbReference>
<dbReference type="SUPFAM" id="SSF55277">
    <property type="entry name" value="GYF domain"/>
    <property type="match status" value="1"/>
</dbReference>
<dbReference type="PROSITE" id="PS50829">
    <property type="entry name" value="GYF"/>
    <property type="match status" value="1"/>
</dbReference>
<proteinExistence type="evidence at protein level"/>
<accession>O95400</accession>
<accession>B2RDX2</accession>
<accession>Q9ULP2</accession>
<organism>
    <name type="scientific">Homo sapiens</name>
    <name type="common">Human</name>
    <dbReference type="NCBI Taxonomy" id="9606"/>
    <lineage>
        <taxon>Eukaryota</taxon>
        <taxon>Metazoa</taxon>
        <taxon>Chordata</taxon>
        <taxon>Craniata</taxon>
        <taxon>Vertebrata</taxon>
        <taxon>Euteleostomi</taxon>
        <taxon>Mammalia</taxon>
        <taxon>Eutheria</taxon>
        <taxon>Euarchontoglires</taxon>
        <taxon>Primates</taxon>
        <taxon>Haplorrhini</taxon>
        <taxon>Catarrhini</taxon>
        <taxon>Hominidae</taxon>
        <taxon>Homo</taxon>
    </lineage>
</organism>
<sequence length="341" mass="37646">MPKRKVTFQGVGDEEDEDEIIVPKKKLVDPVAGSGGPGSRFKGKHSLDSDEEEDDDDGGSSKYDILASEDVEGQEAATLPSEGGVRITPFNLQEEMEEGHFDADGNYFLNRDAQIRDSWLDNIDWVKIRERPPGQRQASDSEEEDSLGQTSMSAQALLEGLLELLLPRETVAGALRRLGARGGGKGRKGPGQPSSPQRLDRLSGLADQMVARGNLGVYQETRERLAMRLKGLGCQTLGPHNPTPPPSLDMFAEELAEEELETPTPTQRGEAESRGDGLVDVMWEYKWENTGDAELYGPFTSAQMQTWVSEGYFPDGVYCRKLDPPGGQFYNSKRIDFDLYT</sequence>
<name>CD2B2_HUMAN</name>
<reference key="1">
    <citation type="journal article" date="1998" name="Proc. Natl. Acad. Sci. U.S.A.">
        <title>Identification of a proline-binding motif regulating CD2-triggered T lymphocyte activation.</title>
        <authorList>
            <person name="Nishizawa K."/>
            <person name="Freund C."/>
            <person name="Li J."/>
            <person name="Wagner G."/>
            <person name="Reinherz E.L."/>
        </authorList>
    </citation>
    <scope>NUCLEOTIDE SEQUENCE [MRNA]</scope>
    <scope>INTERACTION WITH CD2</scope>
</reference>
<reference key="2">
    <citation type="journal article" date="2004" name="Nat. Genet.">
        <title>Complete sequencing and characterization of 21,243 full-length human cDNAs.</title>
        <authorList>
            <person name="Ota T."/>
            <person name="Suzuki Y."/>
            <person name="Nishikawa T."/>
            <person name="Otsuki T."/>
            <person name="Sugiyama T."/>
            <person name="Irie R."/>
            <person name="Wakamatsu A."/>
            <person name="Hayashi K."/>
            <person name="Sato H."/>
            <person name="Nagai K."/>
            <person name="Kimura K."/>
            <person name="Makita H."/>
            <person name="Sekine M."/>
            <person name="Obayashi M."/>
            <person name="Nishi T."/>
            <person name="Shibahara T."/>
            <person name="Tanaka T."/>
            <person name="Ishii S."/>
            <person name="Yamamoto J."/>
            <person name="Saito K."/>
            <person name="Kawai Y."/>
            <person name="Isono Y."/>
            <person name="Nakamura Y."/>
            <person name="Nagahari K."/>
            <person name="Murakami K."/>
            <person name="Yasuda T."/>
            <person name="Iwayanagi T."/>
            <person name="Wagatsuma M."/>
            <person name="Shiratori A."/>
            <person name="Sudo H."/>
            <person name="Hosoiri T."/>
            <person name="Kaku Y."/>
            <person name="Kodaira H."/>
            <person name="Kondo H."/>
            <person name="Sugawara M."/>
            <person name="Takahashi M."/>
            <person name="Kanda K."/>
            <person name="Yokoi T."/>
            <person name="Furuya T."/>
            <person name="Kikkawa E."/>
            <person name="Omura Y."/>
            <person name="Abe K."/>
            <person name="Kamihara K."/>
            <person name="Katsuta N."/>
            <person name="Sato K."/>
            <person name="Tanikawa M."/>
            <person name="Yamazaki M."/>
            <person name="Ninomiya K."/>
            <person name="Ishibashi T."/>
            <person name="Yamashita H."/>
            <person name="Murakawa K."/>
            <person name="Fujimori K."/>
            <person name="Tanai H."/>
            <person name="Kimata M."/>
            <person name="Watanabe M."/>
            <person name="Hiraoka S."/>
            <person name="Chiba Y."/>
            <person name="Ishida S."/>
            <person name="Ono Y."/>
            <person name="Takiguchi S."/>
            <person name="Watanabe S."/>
            <person name="Yosida M."/>
            <person name="Hotuta T."/>
            <person name="Kusano J."/>
            <person name="Kanehori K."/>
            <person name="Takahashi-Fujii A."/>
            <person name="Hara H."/>
            <person name="Tanase T.-O."/>
            <person name="Nomura Y."/>
            <person name="Togiya S."/>
            <person name="Komai F."/>
            <person name="Hara R."/>
            <person name="Takeuchi K."/>
            <person name="Arita M."/>
            <person name="Imose N."/>
            <person name="Musashino K."/>
            <person name="Yuuki H."/>
            <person name="Oshima A."/>
            <person name="Sasaki N."/>
            <person name="Aotsuka S."/>
            <person name="Yoshikawa Y."/>
            <person name="Matsunawa H."/>
            <person name="Ichihara T."/>
            <person name="Shiohata N."/>
            <person name="Sano S."/>
            <person name="Moriya S."/>
            <person name="Momiyama H."/>
            <person name="Satoh N."/>
            <person name="Takami S."/>
            <person name="Terashima Y."/>
            <person name="Suzuki O."/>
            <person name="Nakagawa S."/>
            <person name="Senoh A."/>
            <person name="Mizoguchi H."/>
            <person name="Goto Y."/>
            <person name="Shimizu F."/>
            <person name="Wakebe H."/>
            <person name="Hishigaki H."/>
            <person name="Watanabe T."/>
            <person name="Sugiyama A."/>
            <person name="Takemoto M."/>
            <person name="Kawakami B."/>
            <person name="Yamazaki M."/>
            <person name="Watanabe K."/>
            <person name="Kumagai A."/>
            <person name="Itakura S."/>
            <person name="Fukuzumi Y."/>
            <person name="Fujimori Y."/>
            <person name="Komiyama M."/>
            <person name="Tashiro H."/>
            <person name="Tanigami A."/>
            <person name="Fujiwara T."/>
            <person name="Ono T."/>
            <person name="Yamada K."/>
            <person name="Fujii Y."/>
            <person name="Ozaki K."/>
            <person name="Hirao M."/>
            <person name="Ohmori Y."/>
            <person name="Kawabata A."/>
            <person name="Hikiji T."/>
            <person name="Kobatake N."/>
            <person name="Inagaki H."/>
            <person name="Ikema Y."/>
            <person name="Okamoto S."/>
            <person name="Okitani R."/>
            <person name="Kawakami T."/>
            <person name="Noguchi S."/>
            <person name="Itoh T."/>
            <person name="Shigeta K."/>
            <person name="Senba T."/>
            <person name="Matsumura K."/>
            <person name="Nakajima Y."/>
            <person name="Mizuno T."/>
            <person name="Morinaga M."/>
            <person name="Sasaki M."/>
            <person name="Togashi T."/>
            <person name="Oyama M."/>
            <person name="Hata H."/>
            <person name="Watanabe M."/>
            <person name="Komatsu T."/>
            <person name="Mizushima-Sugano J."/>
            <person name="Satoh T."/>
            <person name="Shirai Y."/>
            <person name="Takahashi Y."/>
            <person name="Nakagawa K."/>
            <person name="Okumura K."/>
            <person name="Nagase T."/>
            <person name="Nomura N."/>
            <person name="Kikuchi H."/>
            <person name="Masuho Y."/>
            <person name="Yamashita R."/>
            <person name="Nakai K."/>
            <person name="Yada T."/>
            <person name="Nakamura Y."/>
            <person name="Ohara O."/>
            <person name="Isogai T."/>
            <person name="Sugano S."/>
        </authorList>
    </citation>
    <scope>NUCLEOTIDE SEQUENCE [LARGE SCALE MRNA]</scope>
    <source>
        <tissue>Testis</tissue>
    </source>
</reference>
<reference key="3">
    <citation type="submission" date="2005-07" db="EMBL/GenBank/DDBJ databases">
        <authorList>
            <person name="Mural R.J."/>
            <person name="Istrail S."/>
            <person name="Sutton G.G."/>
            <person name="Florea L."/>
            <person name="Halpern A.L."/>
            <person name="Mobarry C.M."/>
            <person name="Lippert R."/>
            <person name="Walenz B."/>
            <person name="Shatkay H."/>
            <person name="Dew I."/>
            <person name="Miller J.R."/>
            <person name="Flanigan M.J."/>
            <person name="Edwards N.J."/>
            <person name="Bolanos R."/>
            <person name="Fasulo D."/>
            <person name="Halldorsson B.V."/>
            <person name="Hannenhalli S."/>
            <person name="Turner R."/>
            <person name="Yooseph S."/>
            <person name="Lu F."/>
            <person name="Nusskern D.R."/>
            <person name="Shue B.C."/>
            <person name="Zheng X.H."/>
            <person name="Zhong F."/>
            <person name="Delcher A.L."/>
            <person name="Huson D.H."/>
            <person name="Kravitz S.A."/>
            <person name="Mouchard L."/>
            <person name="Reinert K."/>
            <person name="Remington K.A."/>
            <person name="Clark A.G."/>
            <person name="Waterman M.S."/>
            <person name="Eichler E.E."/>
            <person name="Adams M.D."/>
            <person name="Hunkapiller M.W."/>
            <person name="Myers E.W."/>
            <person name="Venter J.C."/>
        </authorList>
    </citation>
    <scope>NUCLEOTIDE SEQUENCE [LARGE SCALE GENOMIC DNA]</scope>
</reference>
<reference key="4">
    <citation type="journal article" date="2004" name="Genome Res.">
        <title>The status, quality, and expansion of the NIH full-length cDNA project: the Mammalian Gene Collection (MGC).</title>
        <authorList>
            <consortium name="The MGC Project Team"/>
        </authorList>
    </citation>
    <scope>NUCLEOTIDE SEQUENCE [LARGE SCALE MRNA]</scope>
    <source>
        <tissue>Lung</tissue>
    </source>
</reference>
<reference key="5">
    <citation type="journal article" date="1999" name="DNA Res.">
        <title>Characterization of cDNA clones selected by the GeneMark analysis from size-fractionated cDNA libraries from human brain.</title>
        <authorList>
            <person name="Hirosawa M."/>
            <person name="Nagase T."/>
            <person name="Ishikawa K."/>
            <person name="Kikuno R."/>
            <person name="Nomura N."/>
            <person name="Ohara O."/>
        </authorList>
    </citation>
    <scope>NUCLEOTIDE SEQUENCE [LARGE SCALE MRNA] OF 218-341</scope>
    <source>
        <tissue>Brain</tissue>
    </source>
</reference>
<reference key="6">
    <citation type="journal article" date="2005" name="RNA">
        <title>The human U5 snRNP 52K protein (CD2BP2) interacts with U5-102K (hPrp6), a U4/U6.U5 tri-snRNP bridging protein, but dissociates upon tri-snRNP formation.</title>
        <authorList>
            <person name="Laggerbauer B."/>
            <person name="Liu S."/>
            <person name="Makarov E."/>
            <person name="Vornlocher H.P."/>
            <person name="Makarova O."/>
            <person name="Ingelfinger D."/>
            <person name="Achsel T."/>
            <person name="Luhrmann R."/>
        </authorList>
    </citation>
    <scope>FUNCTION</scope>
    <scope>SUBUNIT</scope>
    <scope>INTERACTION WITH PRPF6 AND TXNL4A</scope>
    <scope>SUBCELLULAR LOCATION</scope>
</reference>
<reference key="7">
    <citation type="journal article" date="2006" name="Cell">
        <title>Global, in vivo, and site-specific phosphorylation dynamics in signaling networks.</title>
        <authorList>
            <person name="Olsen J.V."/>
            <person name="Blagoev B."/>
            <person name="Gnad F."/>
            <person name="Macek B."/>
            <person name="Kumar C."/>
            <person name="Mortensen P."/>
            <person name="Mann M."/>
        </authorList>
    </citation>
    <scope>PHOSPHORYLATION [LARGE SCALE ANALYSIS] AT SER-49</scope>
    <scope>IDENTIFICATION BY MASS SPECTROMETRY [LARGE SCALE ANALYSIS]</scope>
    <source>
        <tissue>Cervix carcinoma</tissue>
    </source>
</reference>
<reference key="8">
    <citation type="journal article" date="2006" name="RNA">
        <title>The network of protein-protein interactions within the human U4/U6.U5 tri-snRNP.</title>
        <authorList>
            <person name="Liu S."/>
            <person name="Rauhut R."/>
            <person name="Vornlocher H.-P."/>
            <person name="Luehrmann R."/>
        </authorList>
    </citation>
    <scope>SUBUNIT</scope>
</reference>
<reference key="9">
    <citation type="journal article" date="2007" name="Int. Immunol.">
        <title>Investigating the functional role of CD2BP2 in T cells.</title>
        <authorList>
            <person name="Heinze M."/>
            <person name="Kofler M."/>
            <person name="Freund C."/>
        </authorList>
    </citation>
    <scope>SUBCELLULAR LOCATION</scope>
</reference>
<reference key="10">
    <citation type="journal article" date="2007" name="Mol. Cell. Proteomics">
        <title>Quantitative phosphoproteome profiling of Wnt3a-mediated signaling network: indicating the involvement of ribonucleoside-diphosphate reductase M2 subunit phosphorylation at residue serine 20 in canonical Wnt signal transduction.</title>
        <authorList>
            <person name="Tang L.-Y."/>
            <person name="Deng N."/>
            <person name="Wang L.-S."/>
            <person name="Dai J."/>
            <person name="Wang Z.-L."/>
            <person name="Jiang X.-S."/>
            <person name="Li S.-J."/>
            <person name="Li L."/>
            <person name="Sheng Q.-H."/>
            <person name="Wu D.-Q."/>
            <person name="Li L."/>
            <person name="Zeng R."/>
        </authorList>
    </citation>
    <scope>PHOSPHORYLATION [LARGE SCALE ANALYSIS] AT SER-49</scope>
    <scope>IDENTIFICATION BY MASS SPECTROMETRY [LARGE SCALE ANALYSIS]</scope>
    <source>
        <tissue>Embryonic kidney</tissue>
    </source>
</reference>
<reference key="11">
    <citation type="journal article" date="2008" name="J. Proteome Res.">
        <title>Phosphorylation analysis of primary human T lymphocytes using sequential IMAC and titanium oxide enrichment.</title>
        <authorList>
            <person name="Carrascal M."/>
            <person name="Ovelleiro D."/>
            <person name="Casas V."/>
            <person name="Gay M."/>
            <person name="Abian J."/>
        </authorList>
    </citation>
    <scope>PHOSPHORYLATION [LARGE SCALE ANALYSIS] AT SER-49</scope>
    <scope>IDENTIFICATION BY MASS SPECTROMETRY [LARGE SCALE ANALYSIS]</scope>
    <source>
        <tissue>T-cell</tissue>
    </source>
</reference>
<reference key="12">
    <citation type="journal article" date="2008" name="Proc. Natl. Acad. Sci. U.S.A.">
        <title>A quantitative atlas of mitotic phosphorylation.</title>
        <authorList>
            <person name="Dephoure N."/>
            <person name="Zhou C."/>
            <person name="Villen J."/>
            <person name="Beausoleil S.A."/>
            <person name="Bakalarski C.E."/>
            <person name="Elledge S.J."/>
            <person name="Gygi S.P."/>
        </authorList>
    </citation>
    <scope>IDENTIFICATION BY MASS SPECTROMETRY [LARGE SCALE ANALYSIS]</scope>
    <source>
        <tissue>Cervix carcinoma</tissue>
    </source>
</reference>
<reference key="13">
    <citation type="journal article" date="2008" name="Proteomics">
        <title>Large-scale phosphoproteome analysis of human liver tissue by enrichment and fractionation of phosphopeptides with strong anion exchange chromatography.</title>
        <authorList>
            <person name="Han G."/>
            <person name="Ye M."/>
            <person name="Zhou H."/>
            <person name="Jiang X."/>
            <person name="Feng S."/>
            <person name="Jiang X."/>
            <person name="Tian R."/>
            <person name="Wan D."/>
            <person name="Zou H."/>
            <person name="Gu J."/>
        </authorList>
    </citation>
    <scope>PHOSPHORYLATION [LARGE SCALE ANALYSIS] AT SER-49</scope>
    <scope>IDENTIFICATION BY MASS SPECTROMETRY [LARGE SCALE ANALYSIS]</scope>
    <source>
        <tissue>Liver</tissue>
    </source>
</reference>
<reference key="14">
    <citation type="journal article" date="2010" name="Sci. Signal.">
        <title>Quantitative phosphoproteomics reveals widespread full phosphorylation site occupancy during mitosis.</title>
        <authorList>
            <person name="Olsen J.V."/>
            <person name="Vermeulen M."/>
            <person name="Santamaria A."/>
            <person name="Kumar C."/>
            <person name="Miller M.L."/>
            <person name="Jensen L.J."/>
            <person name="Gnad F."/>
            <person name="Cox J."/>
            <person name="Jensen T.S."/>
            <person name="Nigg E.A."/>
            <person name="Brunak S."/>
            <person name="Mann M."/>
        </authorList>
    </citation>
    <scope>PHOSPHORYLATION [LARGE SCALE ANALYSIS] AT SER-49; SER-118; SER-194 AND SER-195</scope>
    <scope>IDENTIFICATION BY MASS SPECTROMETRY [LARGE SCALE ANALYSIS]</scope>
    <source>
        <tissue>Cervix carcinoma</tissue>
    </source>
</reference>
<reference key="15">
    <citation type="journal article" date="2011" name="BMC Syst. Biol.">
        <title>Initial characterization of the human central proteome.</title>
        <authorList>
            <person name="Burkard T.R."/>
            <person name="Planyavsky M."/>
            <person name="Kaupe I."/>
            <person name="Breitwieser F.P."/>
            <person name="Buerckstuemmer T."/>
            <person name="Bennett K.L."/>
            <person name="Superti-Furga G."/>
            <person name="Colinge J."/>
        </authorList>
    </citation>
    <scope>IDENTIFICATION BY MASS SPECTROMETRY [LARGE SCALE ANALYSIS]</scope>
</reference>
<reference key="16">
    <citation type="journal article" date="2011" name="Sci. Signal.">
        <title>System-wide temporal characterization of the proteome and phosphoproteome of human embryonic stem cell differentiation.</title>
        <authorList>
            <person name="Rigbolt K.T."/>
            <person name="Prokhorova T.A."/>
            <person name="Akimov V."/>
            <person name="Henningsen J."/>
            <person name="Johansen P.T."/>
            <person name="Kratchmarova I."/>
            <person name="Kassem M."/>
            <person name="Mann M."/>
            <person name="Olsen J.V."/>
            <person name="Blagoev B."/>
        </authorList>
    </citation>
    <scope>PHOSPHORYLATION [LARGE SCALE ANALYSIS] AT SER-49</scope>
    <scope>IDENTIFICATION BY MASS SPECTROMETRY [LARGE SCALE ANALYSIS]</scope>
</reference>
<reference key="17">
    <citation type="journal article" date="2013" name="J. Proteome Res.">
        <title>Toward a comprehensive characterization of a human cancer cell phosphoproteome.</title>
        <authorList>
            <person name="Zhou H."/>
            <person name="Di Palma S."/>
            <person name="Preisinger C."/>
            <person name="Peng M."/>
            <person name="Polat A.N."/>
            <person name="Heck A.J."/>
            <person name="Mohammed S."/>
        </authorList>
    </citation>
    <scope>PHOSPHORYLATION [LARGE SCALE ANALYSIS] AT SER-49 AND SER-195</scope>
    <scope>IDENTIFICATION BY MASS SPECTROMETRY [LARGE SCALE ANALYSIS]</scope>
    <source>
        <tissue>Cervix carcinoma</tissue>
        <tissue>Erythroleukemia</tissue>
    </source>
</reference>
<reference key="18">
    <citation type="journal article" date="2014" name="J. Proteomics">
        <title>An enzyme assisted RP-RPLC approach for in-depth analysis of human liver phosphoproteome.</title>
        <authorList>
            <person name="Bian Y."/>
            <person name="Song C."/>
            <person name="Cheng K."/>
            <person name="Dong M."/>
            <person name="Wang F."/>
            <person name="Huang J."/>
            <person name="Sun D."/>
            <person name="Wang L."/>
            <person name="Ye M."/>
            <person name="Zou H."/>
        </authorList>
    </citation>
    <scope>PHOSPHORYLATION [LARGE SCALE ANALYSIS] AT SER-46 AND SER-49</scope>
    <scope>IDENTIFICATION BY MASS SPECTROMETRY [LARGE SCALE ANALYSIS]</scope>
    <source>
        <tissue>Liver</tissue>
    </source>
</reference>
<reference key="19">
    <citation type="journal article" date="2017" name="Nat. Struct. Mol. Biol.">
        <title>Site-specific mapping of the human SUMO proteome reveals co-modification with phosphorylation.</title>
        <authorList>
            <person name="Hendriks I.A."/>
            <person name="Lyon D."/>
            <person name="Young C."/>
            <person name="Jensen L.J."/>
            <person name="Vertegaal A.C."/>
            <person name="Nielsen M.L."/>
        </authorList>
    </citation>
    <scope>SUMOYLATION [LARGE SCALE ANALYSIS] AT LYS-26</scope>
    <scope>IDENTIFICATION BY MASS SPECTROMETRY [LARGE SCALE ANALYSIS]</scope>
</reference>
<reference key="20">
    <citation type="journal article" date="1999" name="Nat. Struct. Biol.">
        <title>The GYF domain is a novel structural fold that is involved in lymphoid signaling through proline-rich sequences.</title>
        <authorList>
            <person name="Freund C."/>
            <person name="Dotsch V."/>
            <person name="Nishizawa K."/>
            <person name="Reinherz E.L."/>
            <person name="Wagner G."/>
        </authorList>
    </citation>
    <scope>STRUCTURE BY NMR OF 280-341</scope>
</reference>
<reference key="21">
    <citation type="journal article" date="2002" name="EMBO J.">
        <title>Dynamic interaction of CD2 with the GYF and the SH3 domain of compartmentalized effector molecules.</title>
        <authorList>
            <person name="Freund C."/>
            <person name="Kuhne R."/>
            <person name="Yang H."/>
            <person name="Park S."/>
            <person name="Reinherz E.L."/>
            <person name="Wagner G."/>
        </authorList>
    </citation>
    <scope>STRUCTURE BY NMR OF 280-341</scope>
    <scope>INTERACTION WITH CD2 PEPTIDE</scope>
    <scope>SUBCELLULAR LOCATION</scope>
</reference>
<reference key="22">
    <citation type="journal article" date="2007" name="J. Mol. Biol.">
        <title>Structural basis for the bifunctionality of the U5 snRNP 52K protein (CD2BP2).</title>
        <authorList>
            <person name="Nielsen T.K."/>
            <person name="Liu S."/>
            <person name="Luhrmann R."/>
            <person name="Ficner R."/>
        </authorList>
    </citation>
    <scope>X-RAY CRYSTALLOGRAPHY (2.35 ANGSTROMS) OF 256-341 IN COMPLEX WITH TXNL4A</scope>
    <scope>INTERACTION WITH TXNL4A</scope>
</reference>
<reference key="23">
    <citation type="journal article" date="2014" name="Nat. Commun.">
        <title>Mutations in the PQBP1 gene prevent its interaction with the spliceosomal protein U5-15 kD.</title>
        <authorList>
            <person name="Mizuguchi M."/>
            <person name="Obita T."/>
            <person name="Serita T."/>
            <person name="Kojima R."/>
            <person name="Nabeshima Y."/>
            <person name="Okazawa H."/>
        </authorList>
    </citation>
    <scope>X-RAY CRYSTALLOGRAPHY (2.50 ANGSTROMS) OF 280-341 IN COMPLEX WITH PQBP1 AND TXNL4A</scope>
    <scope>SUBUNIT</scope>
</reference>
<protein>
    <recommendedName>
        <fullName>CD2 antigen cytoplasmic tail-binding protein 2</fullName>
        <shortName>CD2 cytoplasmic domain-binding protein 2</shortName>
        <shortName>CD2 tail-binding protein 2</shortName>
    </recommendedName>
    <alternativeName>
        <fullName>U5 snRNP 52K protein</fullName>
        <shortName>U5-52K</shortName>
    </alternativeName>
</protein>
<keyword id="KW-0002">3D-structure</keyword>
<keyword id="KW-0007">Acetylation</keyword>
<keyword id="KW-0963">Cytoplasm</keyword>
<keyword id="KW-1017">Isopeptide bond</keyword>
<keyword id="KW-0507">mRNA processing</keyword>
<keyword id="KW-0508">mRNA splicing</keyword>
<keyword id="KW-0539">Nucleus</keyword>
<keyword id="KW-0597">Phosphoprotein</keyword>
<keyword id="KW-1267">Proteomics identification</keyword>
<keyword id="KW-1185">Reference proteome</keyword>
<keyword id="KW-0832">Ubl conjugation</keyword>
<feature type="chain" id="PRO_0000089437" description="CD2 antigen cytoplasmic tail-binding protein 2">
    <location>
        <begin position="1"/>
        <end position="341"/>
    </location>
</feature>
<feature type="domain" description="GYF" evidence="2">
    <location>
        <begin position="280"/>
        <end position="338"/>
    </location>
</feature>
<feature type="region of interest" description="Disordered" evidence="3">
    <location>
        <begin position="1"/>
        <end position="66"/>
    </location>
</feature>
<feature type="region of interest" description="Disordered" evidence="3">
    <location>
        <begin position="131"/>
        <end position="151"/>
    </location>
</feature>
<feature type="region of interest" description="Disordered" evidence="3">
    <location>
        <begin position="178"/>
        <end position="199"/>
    </location>
</feature>
<feature type="compositionally biased region" description="Acidic residues" evidence="3">
    <location>
        <begin position="49"/>
        <end position="58"/>
    </location>
</feature>
<feature type="modified residue" description="N6-acetyllysine" evidence="1">
    <location>
        <position position="44"/>
    </location>
</feature>
<feature type="modified residue" description="Phosphoserine" evidence="17">
    <location>
        <position position="46"/>
    </location>
</feature>
<feature type="modified residue" description="Phosphoserine" evidence="10 11 12 13 14 15 16 17">
    <location>
        <position position="49"/>
    </location>
</feature>
<feature type="modified residue" description="Phosphoserine" evidence="14">
    <location>
        <position position="118"/>
    </location>
</feature>
<feature type="modified residue" description="Phosphoserine" evidence="14">
    <location>
        <position position="194"/>
    </location>
</feature>
<feature type="modified residue" description="Phosphoserine" evidence="14 16">
    <location>
        <position position="195"/>
    </location>
</feature>
<feature type="cross-link" description="Glycyl lysine isopeptide (Lys-Gly) (interchain with G-Cter in SUMO2)" evidence="18">
    <location>
        <position position="26"/>
    </location>
</feature>
<feature type="sequence variant" id="VAR_050772" description="In dbSNP:rs13330462.">
    <original>G</original>
    <variation>D</variation>
    <location>
        <position position="231"/>
    </location>
</feature>
<feature type="sequence variant" id="VAR_050773" description="In dbSNP:rs34391305.">
    <original>T</original>
    <variation>I</variation>
    <location>
        <position position="262"/>
    </location>
</feature>
<feature type="helix" evidence="21">
    <location>
        <begin position="68"/>
        <end position="71"/>
    </location>
</feature>
<feature type="strand" evidence="21">
    <location>
        <begin position="81"/>
        <end position="87"/>
    </location>
</feature>
<feature type="strand" evidence="21">
    <location>
        <begin position="90"/>
        <end position="92"/>
    </location>
</feature>
<feature type="helix" evidence="21">
    <location>
        <begin position="93"/>
        <end position="98"/>
    </location>
</feature>
<feature type="strand" evidence="20">
    <location>
        <begin position="99"/>
        <end position="101"/>
    </location>
</feature>
<feature type="strand" evidence="20">
    <location>
        <begin position="107"/>
        <end position="109"/>
    </location>
</feature>
<feature type="helix" evidence="21">
    <location>
        <begin position="118"/>
        <end position="121"/>
    </location>
</feature>
<feature type="turn" evidence="21">
    <location>
        <begin position="124"/>
        <end position="126"/>
    </location>
</feature>
<feature type="helix" evidence="21">
    <location>
        <begin position="154"/>
        <end position="163"/>
    </location>
</feature>
<feature type="helix" evidence="21">
    <location>
        <begin position="171"/>
        <end position="178"/>
    </location>
</feature>
<feature type="helix" evidence="21">
    <location>
        <begin position="196"/>
        <end position="211"/>
    </location>
</feature>
<feature type="helix" evidence="21">
    <location>
        <begin position="217"/>
        <end position="219"/>
    </location>
</feature>
<feature type="helix" evidence="21">
    <location>
        <begin position="222"/>
        <end position="232"/>
    </location>
</feature>
<feature type="strand" evidence="19">
    <location>
        <begin position="282"/>
        <end position="293"/>
    </location>
</feature>
<feature type="strand" evidence="19">
    <location>
        <begin position="296"/>
        <end position="300"/>
    </location>
</feature>
<feature type="helix" evidence="19">
    <location>
        <begin position="301"/>
        <end position="309"/>
    </location>
</feature>
<feature type="strand" evidence="19">
    <location>
        <begin position="318"/>
        <end position="324"/>
    </location>
</feature>
<feature type="helix" evidence="19">
    <location>
        <begin position="332"/>
        <end position="334"/>
    </location>
</feature>
<feature type="helix" evidence="19">
    <location>
        <begin position="337"/>
        <end position="340"/>
    </location>
</feature>
<comment type="function">
    <text evidence="5">Involved in pre-mRNA splicing as component of the U5 snRNP complex that is involved in spliceosome assembly.</text>
</comment>
<comment type="subunit">
    <text evidence="4 5 6 7 8 9">Component of the U5 snRNP complex composed of the U5 snRNA and at least PRPF6, PRPF8, SNRNP200, EFTUD2, SNRNP40, DDX23, TXNL4A and CD2BP2. Interacts directly with TXNL4A and PRPF6. Interacts (via GYF domain) with CD2 (via Pro-rich sequence in the cytoplasmic domain). Interacts with PQBP1.</text>
</comment>
<comment type="interaction">
    <interactant intactId="EBI-768015">
        <id>O95400</id>
    </interactant>
    <interactant intactId="EBI-2880718">
        <id>Q709F0</id>
        <label>ACAD11</label>
    </interactant>
    <organismsDiffer>false</organismsDiffer>
    <experiments>7</experiments>
</comment>
<comment type="interaction">
    <interactant intactId="EBI-768015">
        <id>O95400</id>
    </interactant>
    <interactant intactId="EBI-2799297">
        <id>Q7Z591</id>
        <label>AKNA</label>
    </interactant>
    <organismsDiffer>false</organismsDiffer>
    <experiments>2</experiments>
</comment>
<comment type="interaction">
    <interactant intactId="EBI-768015">
        <id>O95400</id>
    </interactant>
    <interactant intactId="EBI-3912464">
        <id>P06729</id>
        <label>CD2</label>
    </interactant>
    <organismsDiffer>false</organismsDiffer>
    <experiments>9</experiments>
</comment>
<comment type="interaction">
    <interactant intactId="EBI-768015">
        <id>O95400</id>
    </interactant>
    <interactant intactId="EBI-716006">
        <id>Q9Y5V3</id>
        <label>MAGED1</label>
    </interactant>
    <organismsDiffer>false</organismsDiffer>
    <experiments>3</experiments>
</comment>
<comment type="interaction">
    <interactant intactId="EBI-768015">
        <id>O95400</id>
    </interactant>
    <interactant intactId="EBI-357253">
        <id>P62136</id>
        <label>PPP1CA</label>
    </interactant>
    <organismsDiffer>false</organismsDiffer>
    <experiments>2</experiments>
</comment>
<comment type="interaction">
    <interactant intactId="EBI-768015">
        <id>O95400</id>
    </interactant>
    <interactant intactId="EBI-356283">
        <id>P36873</id>
        <label>PPP1CC</label>
    </interactant>
    <organismsDiffer>false</organismsDiffer>
    <experiments>3</experiments>
</comment>
<comment type="interaction">
    <interactant intactId="EBI-768015">
        <id>O95400</id>
    </interactant>
    <interactant intactId="EBI-536755">
        <id>O94906</id>
        <label>PRPF6</label>
    </interactant>
    <organismsDiffer>false</organismsDiffer>
    <experiments>9</experiments>
</comment>
<comment type="interaction">
    <interactant intactId="EBI-768015">
        <id>O95400</id>
    </interactant>
    <interactant intactId="EBI-945916">
        <id>Q92530</id>
        <label>PSMF1</label>
    </interactant>
    <organismsDiffer>false</organismsDiffer>
    <experiments>2</experiments>
</comment>
<comment type="interaction">
    <interactant intactId="EBI-768015">
        <id>O95400</id>
    </interactant>
    <interactant intactId="EBI-348469">
        <id>Q15427</id>
        <label>SF3B4</label>
    </interactant>
    <organismsDiffer>false</organismsDiffer>
    <experiments>2</experiments>
</comment>
<comment type="interaction">
    <interactant intactId="EBI-768015">
        <id>O95400</id>
    </interactant>
    <interactant intactId="EBI-607085">
        <id>P09012</id>
        <label>SNRPA</label>
    </interactant>
    <organismsDiffer>false</organismsDiffer>
    <experiments>2</experiments>
</comment>
<comment type="interaction">
    <interactant intactId="EBI-768015">
        <id>O95400</id>
    </interactant>
    <interactant intactId="EBI-372458">
        <id>P14678</id>
        <label>SNRPB</label>
    </interactant>
    <organismsDiffer>false</organismsDiffer>
    <experiments>11</experiments>
</comment>
<comment type="interaction">
    <interactant intactId="EBI-768015">
        <id>O95400</id>
    </interactant>
    <interactant intactId="EBI-372475">
        <id>P14678-2</id>
        <label>SNRPB</label>
    </interactant>
    <organismsDiffer>false</organismsDiffer>
    <experiments>10</experiments>
</comment>
<comment type="interaction">
    <interactant intactId="EBI-768015">
        <id>O95400</id>
    </interactant>
    <interactant intactId="EBI-712493">
        <id>P63162</id>
        <label>SNRPN</label>
    </interactant>
    <organismsDiffer>false</organismsDiffer>
    <experiments>6</experiments>
</comment>
<comment type="interaction">
    <interactant intactId="EBI-768015">
        <id>O95400</id>
    </interactant>
    <interactant intactId="EBI-8451480">
        <id>O75865-2</id>
        <label>TRAPPC6A</label>
    </interactant>
    <organismsDiffer>false</organismsDiffer>
    <experiments>3</experiments>
</comment>
<comment type="interaction">
    <interactant intactId="EBI-768015">
        <id>O95400</id>
    </interactant>
    <interactant intactId="EBI-746539">
        <id>P83876</id>
        <label>TXNL4A</label>
    </interactant>
    <organismsDiffer>false</organismsDiffer>
    <experiments>6</experiments>
</comment>
<comment type="interaction">
    <interactant intactId="EBI-768015">
        <id>O95400</id>
    </interactant>
    <interactant intactId="EBI-714455">
        <id>Q9Y2W2</id>
        <label>WBP11</label>
    </interactant>
    <organismsDiffer>false</organismsDiffer>
    <experiments>2</experiments>
</comment>
<comment type="interaction">
    <interactant intactId="EBI-768015">
        <id>O95400</id>
    </interactant>
    <interactant intactId="EBI-2557592">
        <id>Q9UHR6</id>
        <label>ZNHIT2</label>
    </interactant>
    <organismsDiffer>false</organismsDiffer>
    <experiments>4</experiments>
</comment>
<comment type="subcellular location">
    <subcellularLocation>
        <location>Cytoplasm</location>
    </subcellularLocation>
    <subcellularLocation>
        <location>Nucleus</location>
    </subcellularLocation>
    <text>Predominantly nuclear.</text>
</comment>
<evidence type="ECO:0000250" key="1">
    <source>
        <dbReference type="UniProtKB" id="Q9CWK3"/>
    </source>
</evidence>
<evidence type="ECO:0000255" key="2">
    <source>
        <dbReference type="PROSITE-ProRule" id="PRU00101"/>
    </source>
</evidence>
<evidence type="ECO:0000256" key="3">
    <source>
        <dbReference type="SAM" id="MobiDB-lite"/>
    </source>
</evidence>
<evidence type="ECO:0000269" key="4">
    <source>
    </source>
</evidence>
<evidence type="ECO:0000269" key="5">
    <source>
    </source>
</evidence>
<evidence type="ECO:0000269" key="6">
    <source>
    </source>
</evidence>
<evidence type="ECO:0000269" key="7">
    <source>
    </source>
</evidence>
<evidence type="ECO:0000269" key="8">
    <source>
    </source>
</evidence>
<evidence type="ECO:0000269" key="9">
    <source>
    </source>
</evidence>
<evidence type="ECO:0007744" key="10">
    <source>
    </source>
</evidence>
<evidence type="ECO:0007744" key="11">
    <source>
    </source>
</evidence>
<evidence type="ECO:0007744" key="12">
    <source>
    </source>
</evidence>
<evidence type="ECO:0007744" key="13">
    <source>
    </source>
</evidence>
<evidence type="ECO:0007744" key="14">
    <source>
    </source>
</evidence>
<evidence type="ECO:0007744" key="15">
    <source>
    </source>
</evidence>
<evidence type="ECO:0007744" key="16">
    <source>
    </source>
</evidence>
<evidence type="ECO:0007744" key="17">
    <source>
    </source>
</evidence>
<evidence type="ECO:0007744" key="18">
    <source>
    </source>
</evidence>
<evidence type="ECO:0007829" key="19">
    <source>
        <dbReference type="PDB" id="1SYX"/>
    </source>
</evidence>
<evidence type="ECO:0007829" key="20">
    <source>
        <dbReference type="PDB" id="8Q7Q"/>
    </source>
</evidence>
<evidence type="ECO:0007829" key="21">
    <source>
        <dbReference type="PDB" id="8Q91"/>
    </source>
</evidence>
<gene>
    <name type="primary">CD2BP2</name>
    <name type="synonym">KIAA1178</name>
</gene>